<keyword id="KW-0025">Alternative splicing</keyword>
<keyword id="KW-0217">Developmental protein</keyword>
<keyword id="KW-0221">Differentiation</keyword>
<keyword id="KW-0225">Disease variant</keyword>
<keyword id="KW-0238">DNA-binding</keyword>
<keyword id="KW-0371">Homeobox</keyword>
<keyword id="KW-0539">Nucleus</keyword>
<keyword id="KW-0896">Oogenesis</keyword>
<keyword id="KW-1066">Premature ovarian failure</keyword>
<keyword id="KW-1267">Proteomics identification</keyword>
<keyword id="KW-1185">Reference proteome</keyword>
<keyword id="KW-0804">Transcription</keyword>
<keyword id="KW-0805">Transcription regulation</keyword>
<comment type="function">
    <text evidence="6 7">Transcription factor which may play a role in oogenesis. Binds preferentially to the DNA sequences 5'-TAATTG-3', 5'-TAGTTG-3' and 5'-TAATTA-3'.</text>
</comment>
<comment type="subcellular location">
    <subcellularLocation>
        <location evidence="1 7">Nucleus</location>
    </subcellularLocation>
</comment>
<comment type="alternative products">
    <event type="alternative splicing"/>
    <isoform>
        <id>O60393-1</id>
        <name>1</name>
        <sequence type="displayed"/>
    </isoform>
    <isoform>
        <id>O60393-2</id>
        <name>2</name>
        <sequence type="described" ref="VSP_028796"/>
    </isoform>
</comment>
<comment type="tissue specificity">
    <text evidence="3">Expressed in ovaries, testes and pancreas. Expressed within all stages of the adult female germline, from primordial follicles through to MII oocytes.</text>
</comment>
<comment type="disease" evidence="4 5 6 7">
    <disease id="DI-02195">
        <name>Premature ovarian failure 5</name>
        <acronym>POF5</acronym>
        <description>An ovarian disorder defined as the cessation of ovarian function under the age of 40 years. It is characterized by oligomenorrhea or amenorrhea, in the presence of elevated levels of serum gonadotropins and low estradiol.</description>
        <dbReference type="MIM" id="611548"/>
    </disease>
    <text>The disease is caused by variants affecting the gene represented in this entry.</text>
</comment>
<comment type="sequence caution" evidence="9">
    <conflict type="erroneous gene model prediction">
        <sequence resource="EMBL-CDS" id="AAC12957"/>
    </conflict>
</comment>
<name>NOBOX_HUMAN</name>
<organism>
    <name type="scientific">Homo sapiens</name>
    <name type="common">Human</name>
    <dbReference type="NCBI Taxonomy" id="9606"/>
    <lineage>
        <taxon>Eukaryota</taxon>
        <taxon>Metazoa</taxon>
        <taxon>Chordata</taxon>
        <taxon>Craniata</taxon>
        <taxon>Vertebrata</taxon>
        <taxon>Euteleostomi</taxon>
        <taxon>Mammalia</taxon>
        <taxon>Eutheria</taxon>
        <taxon>Euarchontoglires</taxon>
        <taxon>Primates</taxon>
        <taxon>Haplorrhini</taxon>
        <taxon>Catarrhini</taxon>
        <taxon>Hominidae</taxon>
        <taxon>Homo</taxon>
    </lineage>
</organism>
<reference key="1">
    <citation type="journal article" date="2003" name="Nature">
        <title>The DNA sequence of human chromosome 7.</title>
        <authorList>
            <person name="Hillier L.W."/>
            <person name="Fulton R.S."/>
            <person name="Fulton L.A."/>
            <person name="Graves T.A."/>
            <person name="Pepin K.H."/>
            <person name="Wagner-McPherson C."/>
            <person name="Layman D."/>
            <person name="Maas J."/>
            <person name="Jaeger S."/>
            <person name="Walker R."/>
            <person name="Wylie K."/>
            <person name="Sekhon M."/>
            <person name="Becker M.C."/>
            <person name="O'Laughlin M.D."/>
            <person name="Schaller M.E."/>
            <person name="Fewell G.A."/>
            <person name="Delehaunty K.D."/>
            <person name="Miner T.L."/>
            <person name="Nash W.E."/>
            <person name="Cordes M."/>
            <person name="Du H."/>
            <person name="Sun H."/>
            <person name="Edwards J."/>
            <person name="Bradshaw-Cordum H."/>
            <person name="Ali J."/>
            <person name="Andrews S."/>
            <person name="Isak A."/>
            <person name="Vanbrunt A."/>
            <person name="Nguyen C."/>
            <person name="Du F."/>
            <person name="Lamar B."/>
            <person name="Courtney L."/>
            <person name="Kalicki J."/>
            <person name="Ozersky P."/>
            <person name="Bielicki L."/>
            <person name="Scott K."/>
            <person name="Holmes A."/>
            <person name="Harkins R."/>
            <person name="Harris A."/>
            <person name="Strong C.M."/>
            <person name="Hou S."/>
            <person name="Tomlinson C."/>
            <person name="Dauphin-Kohlberg S."/>
            <person name="Kozlowicz-Reilly A."/>
            <person name="Leonard S."/>
            <person name="Rohlfing T."/>
            <person name="Rock S.M."/>
            <person name="Tin-Wollam A.-M."/>
            <person name="Abbott A."/>
            <person name="Minx P."/>
            <person name="Maupin R."/>
            <person name="Strowmatt C."/>
            <person name="Latreille P."/>
            <person name="Miller N."/>
            <person name="Johnson D."/>
            <person name="Murray J."/>
            <person name="Woessner J.P."/>
            <person name="Wendl M.C."/>
            <person name="Yang S.-P."/>
            <person name="Schultz B.R."/>
            <person name="Wallis J.W."/>
            <person name="Spieth J."/>
            <person name="Bieri T.A."/>
            <person name="Nelson J.O."/>
            <person name="Berkowicz N."/>
            <person name="Wohldmann P.E."/>
            <person name="Cook L.L."/>
            <person name="Hickenbotham M.T."/>
            <person name="Eldred J."/>
            <person name="Williams D."/>
            <person name="Bedell J.A."/>
            <person name="Mardis E.R."/>
            <person name="Clifton S.W."/>
            <person name="Chissoe S.L."/>
            <person name="Marra M.A."/>
            <person name="Raymond C."/>
            <person name="Haugen E."/>
            <person name="Gillett W."/>
            <person name="Zhou Y."/>
            <person name="James R."/>
            <person name="Phelps K."/>
            <person name="Iadanoto S."/>
            <person name="Bubb K."/>
            <person name="Simms E."/>
            <person name="Levy R."/>
            <person name="Clendenning J."/>
            <person name="Kaul R."/>
            <person name="Kent W.J."/>
            <person name="Furey T.S."/>
            <person name="Baertsch R.A."/>
            <person name="Brent M.R."/>
            <person name="Keibler E."/>
            <person name="Flicek P."/>
            <person name="Bork P."/>
            <person name="Suyama M."/>
            <person name="Bailey J.A."/>
            <person name="Portnoy M.E."/>
            <person name="Torrents D."/>
            <person name="Chinwalla A.T."/>
            <person name="Gish W.R."/>
            <person name="Eddy S.R."/>
            <person name="McPherson J.D."/>
            <person name="Olson M.V."/>
            <person name="Eichler E.E."/>
            <person name="Green E.D."/>
            <person name="Waterston R.H."/>
            <person name="Wilson R.K."/>
        </authorList>
    </citation>
    <scope>NUCLEOTIDE SEQUENCE [LARGE SCALE GENOMIC DNA]</scope>
</reference>
<reference key="2">
    <citation type="journal article" date="2006" name="Mol. Hum. Reprod.">
        <title>cDNA cloning and expression of the human NOBOX gene in oocytes and ovarian follicles.</title>
        <authorList>
            <person name="Huntriss J."/>
            <person name="Hinkins M."/>
            <person name="Picton H.M."/>
        </authorList>
    </citation>
    <scope>NUCLEOTIDE SEQUENCE [MRNA] OF 99-458 (ISOFORM 2)</scope>
    <scope>TISSUE SPECIFICITY</scope>
</reference>
<reference key="3">
    <citation type="journal article" date="2007" name="Am. J. Hum. Genet.">
        <title>NOBOX homeobox mutation causes premature ovarian failure.</title>
        <authorList>
            <person name="Qin Y."/>
            <person name="Choi Y."/>
            <person name="Zhao H."/>
            <person name="Simpson J.L."/>
            <person name="Chen Z.-J."/>
            <person name="Rajkovic A."/>
        </authorList>
    </citation>
    <scope>VARIANT POF5 HIS-355</scope>
    <scope>VARIANTS GLN-360; ASN-452; SER-482 AND LEU-517</scope>
</reference>
<reference key="4">
    <citation type="journal article" date="2011" name="Hum. Mutat.">
        <title>Novel NOBOX loss-of-function mutations account for 6.2% of cases in a large primary ovarian insufficiency cohort.</title>
        <authorList>
            <person name="Bouilly J."/>
            <person name="Bachelot A."/>
            <person name="Broutin I."/>
            <person name="Touraine P."/>
            <person name="Binart N."/>
        </authorList>
    </citation>
    <scope>VARIANTS POF5 TRP-91; TRP-117; THR-342 AND LEU-350</scope>
</reference>
<reference key="5">
    <citation type="journal article" date="2015" name="J. Clin. Endocrinol. Metab.">
        <title>New NOBOX mutations identified in a large cohort of women with primary ovarian insufficiency decrease KIT-L expression.</title>
        <authorList>
            <person name="Bouilly J."/>
            <person name="Roucher-Boulez F."/>
            <person name="Gompel A."/>
            <person name="Bry-Gauillard H."/>
            <person name="Azibi K."/>
            <person name="Beldjord C."/>
            <person name="Dode C."/>
            <person name="Bouligand J."/>
            <person name="Mantel A.G."/>
            <person name="Hecart A.C."/>
            <person name="Delemer B."/>
            <person name="Young J."/>
            <person name="Binart N."/>
        </authorList>
    </citation>
    <scope>VARIANTS POF5 TRP-91; ARG-111; TRP-117 AND THR-371</scope>
    <scope>CHARACTERIZATION OF VARIANTS POF5 TRP-91; ARG-111; TRP-117 AND THR-371</scope>
    <scope>FUNCTION</scope>
    <scope>DNA-BINDING</scope>
    <scope>VARIANTS LEU-44 AND LEU-619</scope>
    <scope>CHARACTERIZATION OF VARIANTS LEU-44 AND LEU-619</scope>
</reference>
<reference key="6">
    <citation type="journal article" date="2016" name="Hum. Mol. Genet.">
        <title>Impaired protein stability and nuclear localization of NOBOX variants associated with premature ovarian insufficiency.</title>
        <authorList>
            <person name="Ferrari I."/>
            <person name="Bouilly J."/>
            <person name="Beau I."/>
            <person name="Guizzardi F."/>
            <person name="Ferlin A."/>
            <person name="Pollazzon M."/>
            <person name="Salerno M."/>
            <person name="Binart N."/>
            <person name="Persani L."/>
            <person name="Rossetti R."/>
        </authorList>
    </citation>
    <scope>VARIANT LEU-44</scope>
    <scope>CHARACTERIZATION OF VARIANT LEU-44</scope>
    <scope>VARIANTS POF5 TRP-91; ARG-111; ARG-152; 449-ARG--PRO-691 DEL AND ASN-452</scope>
    <scope>CHARACTERIZATION OF VARIANTS POF5 TRP-91; ARG-111; ARG-152; 449-ARG--PRO-691 DEL AND ASN-452</scope>
    <scope>FUNCTION</scope>
    <scope>SUBCELLULAR LOCATION</scope>
</reference>
<accession>O60393</accession>
<accession>A6NCD3</accession>
<accession>A8MZN5</accession>
<dbReference type="EMBL" id="AC004534">
    <property type="protein sequence ID" value="AAC12957.1"/>
    <property type="status" value="ALT_SEQ"/>
    <property type="molecule type" value="Genomic_DNA"/>
</dbReference>
<dbReference type="CCDS" id="CCDS47736.2">
    <molecule id="O60393-1"/>
</dbReference>
<dbReference type="RefSeq" id="NP_001073882.3">
    <molecule id="O60393-1"/>
    <property type="nucleotide sequence ID" value="NM_001080413.3"/>
</dbReference>
<dbReference type="RefSeq" id="XP_016867231.1">
    <molecule id="O60393-2"/>
    <property type="nucleotide sequence ID" value="XM_017011742.3"/>
</dbReference>
<dbReference type="BioGRID" id="126440">
    <property type="interactions" value="7"/>
</dbReference>
<dbReference type="FunCoup" id="O60393">
    <property type="interactions" value="239"/>
</dbReference>
<dbReference type="IntAct" id="O60393">
    <property type="interactions" value="5"/>
</dbReference>
<dbReference type="STRING" id="9606.ENSP00000419457"/>
<dbReference type="GlyGen" id="O60393">
    <property type="glycosylation" value="3 sites, 1 O-linked glycan (1 site)"/>
</dbReference>
<dbReference type="iPTMnet" id="O60393"/>
<dbReference type="PhosphoSitePlus" id="O60393"/>
<dbReference type="BioMuta" id="NOBOX"/>
<dbReference type="jPOST" id="O60393"/>
<dbReference type="MassIVE" id="O60393"/>
<dbReference type="PaxDb" id="9606-ENSP00000419457"/>
<dbReference type="PeptideAtlas" id="O60393"/>
<dbReference type="ProteomicsDB" id="49389">
    <molecule id="O60393-1"/>
</dbReference>
<dbReference type="ProteomicsDB" id="49390">
    <molecule id="O60393-2"/>
</dbReference>
<dbReference type="Antibodypedia" id="32735">
    <property type="antibodies" value="145 antibodies from 18 providers"/>
</dbReference>
<dbReference type="DNASU" id="135935"/>
<dbReference type="Ensembl" id="ENST00000467773.1">
    <molecule id="O60393-1"/>
    <property type="protein sequence ID" value="ENSP00000419457.1"/>
    <property type="gene ID" value="ENSG00000106410.15"/>
</dbReference>
<dbReference type="Ensembl" id="ENST00000483238.5">
    <molecule id="O60393-2"/>
    <property type="protein sequence ID" value="ENSP00000419565.1"/>
    <property type="gene ID" value="ENSG00000106410.15"/>
</dbReference>
<dbReference type="GeneID" id="135935"/>
<dbReference type="KEGG" id="hsa:135935"/>
<dbReference type="MANE-Select" id="ENST00000467773.1">
    <property type="protein sequence ID" value="ENSP00000419457.1"/>
    <property type="RefSeq nucleotide sequence ID" value="NM_001080413.3"/>
    <property type="RefSeq protein sequence ID" value="NP_001073882.3"/>
</dbReference>
<dbReference type="UCSC" id="uc022aoj.1">
    <molecule id="O60393-1"/>
    <property type="organism name" value="human"/>
</dbReference>
<dbReference type="AGR" id="HGNC:22448"/>
<dbReference type="CTD" id="135935"/>
<dbReference type="DisGeNET" id="135935"/>
<dbReference type="GeneCards" id="NOBOX"/>
<dbReference type="HGNC" id="HGNC:22448">
    <property type="gene designation" value="NOBOX"/>
</dbReference>
<dbReference type="HPA" id="ENSG00000106410">
    <property type="expression patterns" value="Not detected"/>
</dbReference>
<dbReference type="MalaCards" id="NOBOX"/>
<dbReference type="MIM" id="610934">
    <property type="type" value="gene"/>
</dbReference>
<dbReference type="MIM" id="611548">
    <property type="type" value="phenotype"/>
</dbReference>
<dbReference type="neXtProt" id="NX_O60393"/>
<dbReference type="OpenTargets" id="ENSG00000106410"/>
<dbReference type="VEuPathDB" id="HostDB:ENSG00000106410"/>
<dbReference type="eggNOG" id="KOG0490">
    <property type="taxonomic scope" value="Eukaryota"/>
</dbReference>
<dbReference type="GeneTree" id="ENSGT00650000093445"/>
<dbReference type="HOGENOM" id="CLU_034811_2_0_1"/>
<dbReference type="InParanoid" id="O60393"/>
<dbReference type="OMA" id="WIGGGPT"/>
<dbReference type="OrthoDB" id="1867783at2759"/>
<dbReference type="PAN-GO" id="O60393">
    <property type="GO annotations" value="3 GO annotations based on evolutionary models"/>
</dbReference>
<dbReference type="PhylomeDB" id="O60393"/>
<dbReference type="TreeFam" id="TF337576"/>
<dbReference type="PathwayCommons" id="O60393"/>
<dbReference type="BioGRID-ORCS" id="135935">
    <property type="hits" value="3 hits in 335 CRISPR screens"/>
</dbReference>
<dbReference type="GeneWiki" id="NOBOX"/>
<dbReference type="GenomeRNAi" id="135935"/>
<dbReference type="Pharos" id="O60393">
    <property type="development level" value="Tbio"/>
</dbReference>
<dbReference type="PRO" id="PR:O60393"/>
<dbReference type="Proteomes" id="UP000005640">
    <property type="component" value="Chromosome 7"/>
</dbReference>
<dbReference type="RNAct" id="O60393">
    <property type="molecule type" value="protein"/>
</dbReference>
<dbReference type="Bgee" id="ENSG00000106410">
    <property type="expression patterns" value="Expressed in primordial germ cell in gonad and 4 other cell types or tissues"/>
</dbReference>
<dbReference type="ExpressionAtlas" id="O60393">
    <property type="expression patterns" value="baseline and differential"/>
</dbReference>
<dbReference type="GO" id="GO:0000785">
    <property type="term" value="C:chromatin"/>
    <property type="evidence" value="ECO:0000247"/>
    <property type="project" value="NTNU_SB"/>
</dbReference>
<dbReference type="GO" id="GO:0005634">
    <property type="term" value="C:nucleus"/>
    <property type="evidence" value="ECO:0007669"/>
    <property type="project" value="UniProtKB-SubCell"/>
</dbReference>
<dbReference type="GO" id="GO:0000981">
    <property type="term" value="F:DNA-binding transcription factor activity, RNA polymerase II-specific"/>
    <property type="evidence" value="ECO:0000247"/>
    <property type="project" value="NTNU_SB"/>
</dbReference>
<dbReference type="GO" id="GO:0000978">
    <property type="term" value="F:RNA polymerase II cis-regulatory region sequence-specific DNA binding"/>
    <property type="evidence" value="ECO:0000318"/>
    <property type="project" value="GO_Central"/>
</dbReference>
<dbReference type="GO" id="GO:0043565">
    <property type="term" value="F:sequence-specific DNA binding"/>
    <property type="evidence" value="ECO:0000314"/>
    <property type="project" value="UniProtKB"/>
</dbReference>
<dbReference type="GO" id="GO:0048477">
    <property type="term" value="P:oogenesis"/>
    <property type="evidence" value="ECO:0007669"/>
    <property type="project" value="UniProtKB-KW"/>
</dbReference>
<dbReference type="GO" id="GO:0006357">
    <property type="term" value="P:regulation of transcription by RNA polymerase II"/>
    <property type="evidence" value="ECO:0000314"/>
    <property type="project" value="UniProtKB"/>
</dbReference>
<dbReference type="CDD" id="cd00086">
    <property type="entry name" value="homeodomain"/>
    <property type="match status" value="1"/>
</dbReference>
<dbReference type="Gene3D" id="1.10.10.60">
    <property type="entry name" value="Homeodomain-like"/>
    <property type="match status" value="1"/>
</dbReference>
<dbReference type="InterPro" id="IPR001356">
    <property type="entry name" value="HD"/>
</dbReference>
<dbReference type="InterPro" id="IPR009057">
    <property type="entry name" value="Homeodomain-like_sf"/>
</dbReference>
<dbReference type="InterPro" id="IPR042988">
    <property type="entry name" value="NOBOX"/>
</dbReference>
<dbReference type="PANTHER" id="PTHR47060">
    <property type="entry name" value="HOMEOBOX PROTEIN NOBOX"/>
    <property type="match status" value="1"/>
</dbReference>
<dbReference type="PANTHER" id="PTHR47060:SF1">
    <property type="entry name" value="HOMEOBOX PROTEIN NOBOX"/>
    <property type="match status" value="1"/>
</dbReference>
<dbReference type="Pfam" id="PF00046">
    <property type="entry name" value="Homeodomain"/>
    <property type="match status" value="1"/>
</dbReference>
<dbReference type="SMART" id="SM00389">
    <property type="entry name" value="HOX"/>
    <property type="match status" value="1"/>
</dbReference>
<dbReference type="SUPFAM" id="SSF46689">
    <property type="entry name" value="Homeodomain-like"/>
    <property type="match status" value="1"/>
</dbReference>
<dbReference type="PROSITE" id="PS50071">
    <property type="entry name" value="HOMEOBOX_2"/>
    <property type="match status" value="1"/>
</dbReference>
<gene>
    <name type="primary">NOBOX</name>
</gene>
<sequence length="691" mass="73906">MALLLTLTSPDLEGTWDTRDKDGFKAQEGPPLAVPEFPVCGLYRIYGVCGSFSSFFIIRCSLCALETLKSPQHDPLEIPEQSLKLIPLVSGKRELTRGQKAGEKPLAAGPGEEELLRGSAPHAQDTQSEELPPSCTISGEKKPPAVSGEATGADAGRLCPPPRSRAPHKDRTLARSRPQTQGEDCSLPVGEVKIGKRSYSPAPGKQKKPNAMGLAPTSSPGAPNSARATHNPVPCGSGRGPCHLANLLSTLAQSNQNRDHKQGPPEVTCQIRKKTRTLYRSDQLEELEKIFQEDHYPDSDKRREIAQTVGVTPQRIMVKGAGSLVAGWSGGGPTIETLELQSERSAVAWVWFQNRRAKWRKMEKLNGKESKDNPAAPGPASSQCSSAAEILPAVPMEPKPDPFPQESPLDTFPEPPMLLTSDQTLAPTQPSEGAQRVVTPPLFSPPPVRRADLPFPLGPVHTPQLMPLLMDVAGSDSSHKDGPCGSWGTSITLPPPCSYLEELEPQDYQQSNQPGPFQFSQAPQPPLFQSPQPKLPYLPTFPFSMPSSLTLPPPEDSLFMFPCGPSGGTSQGYCPGASSGQILMQPPAGNIGTASWSDPCLPELPFPGPFCPQALGHPPGGDGYFPDLFPTPCPQALGRQPSSALSWMPEGARPGTGPLLSKAKEEPPAASLDQPSALEEARGDDKNSHVP</sequence>
<feature type="chain" id="PRO_0000268865" description="Homeobox protein NOBOX">
    <location>
        <begin position="1"/>
        <end position="691"/>
    </location>
</feature>
<feature type="DNA-binding region" description="Homeobox" evidence="1">
    <location>
        <begin position="272"/>
        <end position="363"/>
    </location>
</feature>
<feature type="region of interest" description="Disordered" evidence="2">
    <location>
        <begin position="94"/>
        <end position="233"/>
    </location>
</feature>
<feature type="region of interest" description="Disordered" evidence="2">
    <location>
        <begin position="366"/>
        <end position="385"/>
    </location>
</feature>
<feature type="region of interest" description="Disordered" evidence="2">
    <location>
        <begin position="394"/>
        <end position="437"/>
    </location>
</feature>
<feature type="region of interest" description="Disordered" evidence="2">
    <location>
        <begin position="635"/>
        <end position="691"/>
    </location>
</feature>
<feature type="compositionally biased region" description="Basic and acidic residues" evidence="2">
    <location>
        <begin position="94"/>
        <end position="103"/>
    </location>
</feature>
<feature type="compositionally biased region" description="Polar residues" evidence="2">
    <location>
        <begin position="216"/>
        <end position="228"/>
    </location>
</feature>
<feature type="compositionally biased region" description="Pro residues" evidence="2">
    <location>
        <begin position="395"/>
        <end position="405"/>
    </location>
</feature>
<feature type="compositionally biased region" description="Polar residues" evidence="2">
    <location>
        <begin position="420"/>
        <end position="432"/>
    </location>
</feature>
<feature type="compositionally biased region" description="Basic and acidic residues" evidence="2">
    <location>
        <begin position="679"/>
        <end position="691"/>
    </location>
</feature>
<feature type="splice variant" id="VSP_028796" description="In isoform 2." evidence="8">
    <location>
        <begin position="318"/>
        <end position="349"/>
    </location>
</feature>
<feature type="sequence variant" id="VAR_078291" description="No effect on transactivation activity; not statistically significant decrease of nuclear location; dbSNP:rs115206969." evidence="6 7">
    <original>R</original>
    <variation>L</variation>
    <location>
        <position position="44"/>
    </location>
</feature>
<feature type="sequence variant" id="VAR_066013" description="In POF5; uncertain significance; decreased transactivation activity; decreased nuclear location; intranuclear and cytosolic aggregates; dbSNP:rs77587352." evidence="5 6 7">
    <original>G</original>
    <variation>W</variation>
    <location>
        <position position="91"/>
    </location>
</feature>
<feature type="sequence variant" id="VAR_078292" description="In POF5; uncertain significance; loss of transactivation activity; intranuclear and cytosolic aggregates; not statistically significant decrease of nuclear location; dbSNP:rs571490209." evidence="6 7">
    <original>G</original>
    <variation>R</variation>
    <location>
        <position position="111"/>
    </location>
</feature>
<feature type="sequence variant" id="VAR_061266" description="In POF5; uncertain significance; decreased transactivation activity; dbSNP:rs7800847." evidence="5 6">
    <original>R</original>
    <variation>W</variation>
    <location>
        <position position="117"/>
    </location>
</feature>
<feature type="sequence variant" id="VAR_078293" description="In POF5; uncertain significance; decreased nuclear location; intranuclear and cytosolic aggregates; dbSNP:rs201806397." evidence="7">
    <original>G</original>
    <variation>R</variation>
    <location>
        <position position="152"/>
    </location>
</feature>
<feature type="sequence variant" id="VAR_066014" description="In POF5; dbSNP:rs193303103." evidence="5">
    <original>S</original>
    <variation>T</variation>
    <location>
        <position position="342"/>
    </location>
</feature>
<feature type="sequence variant" id="VAR_066015" description="In POF5; dbSNP:rs193303104." evidence="5">
    <original>V</original>
    <variation>L</variation>
    <location>
        <position position="350"/>
    </location>
</feature>
<feature type="sequence variant" id="VAR_036636" description="In POF5; dbSNP:rs201947677." evidence="4">
    <original>R</original>
    <variation>H</variation>
    <location>
        <position position="355"/>
    </location>
</feature>
<feature type="sequence variant" id="VAR_036637" description="In dbSNP:rs199538689." evidence="4">
    <original>R</original>
    <variation>Q</variation>
    <location>
        <position position="360"/>
    </location>
</feature>
<feature type="sequence variant" id="VAR_078294" description="In POF5; uncertain significance; decreased transactivation activity; dbSNP:rs189306575." evidence="6">
    <original>K</original>
    <variation>T</variation>
    <location>
        <position position="371"/>
    </location>
</feature>
<feature type="sequence variant" id="VAR_078295" description="In POF5; uncertain significance; not statistically significant decrease of nuclear location." evidence="7">
    <location>
        <begin position="449"/>
        <end position="691"/>
    </location>
</feature>
<feature type="sequence variant" id="VAR_036638" description="In POF5; likely benign; decreased nuclear location; intranuclear and cytosolic aggregates; dbSNP:rs112190116." evidence="4 7">
    <original>D</original>
    <variation>N</variation>
    <location>
        <position position="452"/>
    </location>
</feature>
<feature type="sequence variant" id="VAR_036639" description="In dbSNP:rs2525702." evidence="4">
    <original>G</original>
    <variation>S</variation>
    <location>
        <position position="482"/>
    </location>
</feature>
<feature type="sequence variant" id="VAR_036640" description="In dbSNP:rs2699503." evidence="4">
    <original>F</original>
    <variation>L</variation>
    <location>
        <position position="517"/>
    </location>
</feature>
<feature type="sequence variant" id="VAR_078296" description="No effect on transactivation activity; dbSNP:rs146227301." evidence="6">
    <original>P</original>
    <variation>L</variation>
    <location>
        <position position="619"/>
    </location>
</feature>
<evidence type="ECO:0000255" key="1">
    <source>
        <dbReference type="PROSITE-ProRule" id="PRU00108"/>
    </source>
</evidence>
<evidence type="ECO:0000256" key="2">
    <source>
        <dbReference type="SAM" id="MobiDB-lite"/>
    </source>
</evidence>
<evidence type="ECO:0000269" key="3">
    <source>
    </source>
</evidence>
<evidence type="ECO:0000269" key="4">
    <source>
    </source>
</evidence>
<evidence type="ECO:0000269" key="5">
    <source>
    </source>
</evidence>
<evidence type="ECO:0000269" key="6">
    <source>
    </source>
</evidence>
<evidence type="ECO:0000269" key="7">
    <source>
    </source>
</evidence>
<evidence type="ECO:0000303" key="8">
    <source>
    </source>
</evidence>
<evidence type="ECO:0000305" key="9"/>
<protein>
    <recommendedName>
        <fullName>Homeobox protein NOBOX</fullName>
    </recommendedName>
</protein>
<proteinExistence type="evidence at protein level"/>